<gene>
    <name evidence="6" type="primary">RAF1</name>
</gene>
<reference key="1">
    <citation type="journal article" date="2009" name="PLoS Genet.">
        <title>Sequencing, mapping, and analysis of 27,455 maize full-length cDNAs.</title>
        <authorList>
            <person name="Soderlund C."/>
            <person name="Descour A."/>
            <person name="Kudrna D."/>
            <person name="Bomhoff M."/>
            <person name="Boyd L."/>
            <person name="Currie J."/>
            <person name="Angelova A."/>
            <person name="Collura K."/>
            <person name="Wissotski M."/>
            <person name="Ashley E."/>
            <person name="Morrow D."/>
            <person name="Fernandes J."/>
            <person name="Walbot V."/>
            <person name="Yu Y."/>
        </authorList>
    </citation>
    <scope>NUCLEOTIDE SEQUENCE [MRNA]</scope>
    <source>
        <strain>cv. B73</strain>
    </source>
</reference>
<reference key="2">
    <citation type="journal article" date="2012" name="Plant Cell">
        <title>Ribulose-1,5-bis-phosphate carboxylase/oxygenase accumulation factor1 is required for holoenzyme assembly in maize.</title>
        <authorList>
            <person name="Feiz L."/>
            <person name="Williams-Carrier R."/>
            <person name="Wostrikoff K."/>
            <person name="Belcher S."/>
            <person name="Barkan A."/>
            <person name="Stern D.B."/>
        </authorList>
    </citation>
    <scope>FUNCTION</scope>
    <scope>SUBUNIT</scope>
    <scope>DISRUPTION PHENOTYPE</scope>
    <scope>TISSUE SPECIFICITY</scope>
</reference>
<dbReference type="EMBL" id="BT039567">
    <property type="protein sequence ID" value="ACF84572.1"/>
    <property type="molecule type" value="mRNA"/>
</dbReference>
<dbReference type="RefSeq" id="NP_001140763.1">
    <property type="nucleotide sequence ID" value="NM_001147291.1"/>
</dbReference>
<dbReference type="SMR" id="B4FR29"/>
<dbReference type="FunCoup" id="B4FR29">
    <property type="interactions" value="1360"/>
</dbReference>
<dbReference type="STRING" id="4577.B4FR29"/>
<dbReference type="PaxDb" id="4577-GRMZM2G457621_P01"/>
<dbReference type="EnsemblPlants" id="Zm00001eb066000_T001">
    <property type="protein sequence ID" value="Zm00001eb066000_P001"/>
    <property type="gene ID" value="Zm00001eb066000"/>
</dbReference>
<dbReference type="GeneID" id="100272838"/>
<dbReference type="Gramene" id="Zm00001eb066000_T001">
    <property type="protein sequence ID" value="Zm00001eb066000_P001"/>
    <property type="gene ID" value="Zm00001eb066000"/>
</dbReference>
<dbReference type="KEGG" id="zma:100272838"/>
<dbReference type="eggNOG" id="ENOG502QRYH">
    <property type="taxonomic scope" value="Eukaryota"/>
</dbReference>
<dbReference type="HOGENOM" id="CLU_041979_0_0_1"/>
<dbReference type="InParanoid" id="B4FR29"/>
<dbReference type="OMA" id="LWHEYAP"/>
<dbReference type="OrthoDB" id="2017169at2759"/>
<dbReference type="Proteomes" id="UP000007305">
    <property type="component" value="Chromosome 2"/>
</dbReference>
<dbReference type="ExpressionAtlas" id="B4FR29">
    <property type="expression patterns" value="baseline"/>
</dbReference>
<dbReference type="GO" id="GO:0009507">
    <property type="term" value="C:chloroplast"/>
    <property type="evidence" value="ECO:0007669"/>
    <property type="project" value="UniProtKB-SubCell"/>
</dbReference>
<dbReference type="GO" id="GO:0110102">
    <property type="term" value="P:ribulose bisphosphate carboxylase complex assembly"/>
    <property type="evidence" value="ECO:0007669"/>
    <property type="project" value="UniProtKB-ARBA"/>
</dbReference>
<dbReference type="InterPro" id="IPR037494">
    <property type="entry name" value="RAF1"/>
</dbReference>
<dbReference type="InterPro" id="IPR040858">
    <property type="entry name" value="Raf1_C"/>
</dbReference>
<dbReference type="InterPro" id="IPR040781">
    <property type="entry name" value="Raf1_HTH"/>
</dbReference>
<dbReference type="InterPro" id="IPR041358">
    <property type="entry name" value="Raf1_N"/>
</dbReference>
<dbReference type="PANTHER" id="PTHR35299">
    <property type="entry name" value="RUBISCO ACCUMULATION FACTOR 1"/>
    <property type="match status" value="1"/>
</dbReference>
<dbReference type="PANTHER" id="PTHR35299:SF3">
    <property type="entry name" value="RUBISCO ACCUMULATION FACTOR 1.2, CHLOROPLASTIC"/>
    <property type="match status" value="1"/>
</dbReference>
<dbReference type="Pfam" id="PF18579">
    <property type="entry name" value="Raf1_HTH"/>
    <property type="match status" value="1"/>
</dbReference>
<dbReference type="Pfam" id="PF18578">
    <property type="entry name" value="Raf1_N"/>
    <property type="match status" value="1"/>
</dbReference>
<dbReference type="Pfam" id="PF18087">
    <property type="entry name" value="RuBisCo_chap_C"/>
    <property type="match status" value="1"/>
</dbReference>
<proteinExistence type="evidence at protein level"/>
<accession>B4FR29</accession>
<sequence>MLSLSHPHPHPAASTTAPRHQRTAPVWHRRRASHIAASAILLPGGGSTGGRGGPGDRRLPFTPPPMAPPGQLYQPFHPPPSPLPPSLRNLDLSERLQILRDRMGLWHEYAPLISSLSRDGFNPSSIQEATGISGVEQNCLVVASQVRDSLLDDRAAAFPPDLLPYFDSLGGPEVLYELRFLNARQRADAARHAIGYRLEPKGVRELARAMKGFPRWRGEEGWEAFSKDSPADCLAFARFRQSREAIDVQDRVAELERALQVVETESGRARVELELERARRKAAGEEEVDEEGEEDDAAASLRPGVTVVRLRYGEVAEATTVILLPVVRETDGVAAMESAPRRAKTDVGLGVVEVDRAWARWAVVPGWGPVAEAADDAVVVELADGRRLPWRMSDEEPVLVIANRSKKEVVEEGVYVLEREGRLVVERGKKLAEQGIAAAAAEVVIVVRPPKDEDDMVSDEEWD</sequence>
<evidence type="ECO:0000250" key="1">
    <source>
        <dbReference type="UniProtKB" id="Q8YLP6"/>
    </source>
</evidence>
<evidence type="ECO:0000250" key="2">
    <source>
        <dbReference type="UniProtKB" id="Q9SR19"/>
    </source>
</evidence>
<evidence type="ECO:0000255" key="3"/>
<evidence type="ECO:0000256" key="4">
    <source>
        <dbReference type="SAM" id="MobiDB-lite"/>
    </source>
</evidence>
<evidence type="ECO:0000269" key="5">
    <source>
    </source>
</evidence>
<evidence type="ECO:0000303" key="6">
    <source>
    </source>
</evidence>
<evidence type="ECO:0000305" key="7"/>
<protein>
    <recommendedName>
        <fullName evidence="6">Rubisco accumulation factor 1, chloroplastic</fullName>
    </recommendedName>
</protein>
<name>RAF1_MAIZE</name>
<feature type="transit peptide" description="Chloroplast" evidence="3">
    <location>
        <begin position="1"/>
        <end position="31"/>
    </location>
</feature>
<feature type="chain" id="PRO_0000424240" description="Rubisco accumulation factor 1, chloroplastic">
    <location>
        <begin position="32"/>
        <end position="463"/>
    </location>
</feature>
<feature type="region of interest" description="Disordered" evidence="4">
    <location>
        <begin position="1"/>
        <end position="84"/>
    </location>
</feature>
<feature type="region of interest" description="N-terminal alpha-helix" evidence="2">
    <location>
        <begin position="83"/>
        <end position="275"/>
    </location>
</feature>
<feature type="region of interest" description="C-terminal beta sheet" evidence="2">
    <location>
        <begin position="305"/>
        <end position="450"/>
    </location>
</feature>
<feature type="coiled-coil region" evidence="3">
    <location>
        <begin position="240"/>
        <end position="294"/>
    </location>
</feature>
<feature type="compositionally biased region" description="Low complexity" evidence="4">
    <location>
        <begin position="1"/>
        <end position="18"/>
    </location>
</feature>
<feature type="compositionally biased region" description="Basic residues" evidence="4">
    <location>
        <begin position="19"/>
        <end position="33"/>
    </location>
</feature>
<feature type="compositionally biased region" description="Gly residues" evidence="4">
    <location>
        <begin position="43"/>
        <end position="53"/>
    </location>
</feature>
<organism>
    <name type="scientific">Zea mays</name>
    <name type="common">Maize</name>
    <dbReference type="NCBI Taxonomy" id="4577"/>
    <lineage>
        <taxon>Eukaryota</taxon>
        <taxon>Viridiplantae</taxon>
        <taxon>Streptophyta</taxon>
        <taxon>Embryophyta</taxon>
        <taxon>Tracheophyta</taxon>
        <taxon>Spermatophyta</taxon>
        <taxon>Magnoliopsida</taxon>
        <taxon>Liliopsida</taxon>
        <taxon>Poales</taxon>
        <taxon>Poaceae</taxon>
        <taxon>PACMAD clade</taxon>
        <taxon>Panicoideae</taxon>
        <taxon>Andropogonodae</taxon>
        <taxon>Andropogoneae</taxon>
        <taxon>Tripsacinae</taxon>
        <taxon>Zea</taxon>
    </lineage>
</organism>
<comment type="function">
    <text evidence="5">Required for assembly or stability of RuBisCO. Acts at a postchaperonin step to fold and/or assemble the large subunit (LS) into RuBisCO.</text>
</comment>
<comment type="subunit">
    <text evidence="5">Homotrimer.</text>
</comment>
<comment type="subcellular location">
    <subcellularLocation>
        <location evidence="7">Plastid</location>
        <location evidence="7">Chloroplast</location>
    </subcellularLocation>
</comment>
<comment type="tissue specificity">
    <text evidence="5">Expressed in bundle sheath.</text>
</comment>
<comment type="domain">
    <text evidence="1 2">Has 3 domains, the N-terminal alpha-helical domain, an extended flexible linker and the C-terminal beta-sheet domain. The N-terminal alpha-helical domain stabilizes RbcL dimers and RbcL dimer-dimer interactions, facilitating RbcL(8) formation. The C-terminal beta-sheet domain probably dimerizes Raf1 (By similarity). The 2 C-terminal beta-sheet domains are swapped and pack against each other to form the dimer interface (By similarity).</text>
</comment>
<comment type="disruption phenotype">
    <text evidence="5">Seedling lethal due to a lack of RuBisCO.</text>
</comment>
<comment type="similarity">
    <text evidence="7">Belongs to the RAF family.</text>
</comment>
<keyword id="KW-0143">Chaperone</keyword>
<keyword id="KW-0150">Chloroplast</keyword>
<keyword id="KW-0175">Coiled coil</keyword>
<keyword id="KW-0934">Plastid</keyword>
<keyword id="KW-1185">Reference proteome</keyword>
<keyword id="KW-0809">Transit peptide</keyword>